<dbReference type="EMBL" id="AE014291">
    <property type="protein sequence ID" value="AAN30354.1"/>
    <property type="molecule type" value="Genomic_DNA"/>
</dbReference>
<dbReference type="EMBL" id="CP002997">
    <property type="protein sequence ID" value="AEM18770.1"/>
    <property type="molecule type" value="Genomic_DNA"/>
</dbReference>
<dbReference type="SMR" id="P65545"/>
<dbReference type="KEGG" id="bms:BR1441"/>
<dbReference type="KEGG" id="bsi:BS1330_I1435"/>
<dbReference type="HOGENOM" id="CLU_020088_2_0_5"/>
<dbReference type="Proteomes" id="UP000007104">
    <property type="component" value="Chromosome I"/>
</dbReference>
<dbReference type="GO" id="GO:0005886">
    <property type="term" value="C:plasma membrane"/>
    <property type="evidence" value="ECO:0007669"/>
    <property type="project" value="UniProtKB-SubCell"/>
</dbReference>
<dbReference type="GO" id="GO:0015086">
    <property type="term" value="F:cadmium ion transmembrane transporter activity"/>
    <property type="evidence" value="ECO:0007669"/>
    <property type="project" value="TreeGrafter"/>
</dbReference>
<dbReference type="GO" id="GO:0005384">
    <property type="term" value="F:manganese ion transmembrane transporter activity"/>
    <property type="evidence" value="ECO:0007669"/>
    <property type="project" value="TreeGrafter"/>
</dbReference>
<dbReference type="GO" id="GO:0046872">
    <property type="term" value="F:metal ion binding"/>
    <property type="evidence" value="ECO:0007669"/>
    <property type="project" value="UniProtKB-UniRule"/>
</dbReference>
<dbReference type="GO" id="GO:0015293">
    <property type="term" value="F:symporter activity"/>
    <property type="evidence" value="ECO:0007669"/>
    <property type="project" value="UniProtKB-UniRule"/>
</dbReference>
<dbReference type="GO" id="GO:0034755">
    <property type="term" value="P:iron ion transmembrane transport"/>
    <property type="evidence" value="ECO:0007669"/>
    <property type="project" value="TreeGrafter"/>
</dbReference>
<dbReference type="HAMAP" id="MF_00221">
    <property type="entry name" value="NRAMP"/>
    <property type="match status" value="1"/>
</dbReference>
<dbReference type="InterPro" id="IPR001046">
    <property type="entry name" value="NRAMP_fam"/>
</dbReference>
<dbReference type="NCBIfam" id="TIGR01197">
    <property type="entry name" value="nramp"/>
    <property type="match status" value="1"/>
</dbReference>
<dbReference type="NCBIfam" id="NF037982">
    <property type="entry name" value="Nramp_1"/>
    <property type="match status" value="1"/>
</dbReference>
<dbReference type="NCBIfam" id="NF001923">
    <property type="entry name" value="PRK00701.1"/>
    <property type="match status" value="1"/>
</dbReference>
<dbReference type="PANTHER" id="PTHR11706:SF33">
    <property type="entry name" value="NATURAL RESISTANCE-ASSOCIATED MACROPHAGE PROTEIN 2"/>
    <property type="match status" value="1"/>
</dbReference>
<dbReference type="PANTHER" id="PTHR11706">
    <property type="entry name" value="SOLUTE CARRIER PROTEIN FAMILY 11 MEMBER"/>
    <property type="match status" value="1"/>
</dbReference>
<dbReference type="Pfam" id="PF01566">
    <property type="entry name" value="Nramp"/>
    <property type="match status" value="1"/>
</dbReference>
<dbReference type="PRINTS" id="PR00447">
    <property type="entry name" value="NATRESASSCMP"/>
</dbReference>
<reference key="1">
    <citation type="journal article" date="2002" name="Proc. Natl. Acad. Sci. U.S.A.">
        <title>The Brucella suis genome reveals fundamental similarities between animal and plant pathogens and symbionts.</title>
        <authorList>
            <person name="Paulsen I.T."/>
            <person name="Seshadri R."/>
            <person name="Nelson K.E."/>
            <person name="Eisen J.A."/>
            <person name="Heidelberg J.F."/>
            <person name="Read T.D."/>
            <person name="Dodson R.J."/>
            <person name="Umayam L.A."/>
            <person name="Brinkac L.M."/>
            <person name="Beanan M.J."/>
            <person name="Daugherty S.C."/>
            <person name="DeBoy R.T."/>
            <person name="Durkin A.S."/>
            <person name="Kolonay J.F."/>
            <person name="Madupu R."/>
            <person name="Nelson W.C."/>
            <person name="Ayodeji B."/>
            <person name="Kraul M."/>
            <person name="Shetty J."/>
            <person name="Malek J.A."/>
            <person name="Van Aken S.E."/>
            <person name="Riedmuller S."/>
            <person name="Tettelin H."/>
            <person name="Gill S.R."/>
            <person name="White O."/>
            <person name="Salzberg S.L."/>
            <person name="Hoover D.L."/>
            <person name="Lindler L.E."/>
            <person name="Halling S.M."/>
            <person name="Boyle S.M."/>
            <person name="Fraser C.M."/>
        </authorList>
    </citation>
    <scope>NUCLEOTIDE SEQUENCE [LARGE SCALE GENOMIC DNA]</scope>
    <source>
        <strain>1330</strain>
    </source>
</reference>
<reference key="2">
    <citation type="journal article" date="2011" name="J. Bacteriol.">
        <title>Revised genome sequence of Brucella suis 1330.</title>
        <authorList>
            <person name="Tae H."/>
            <person name="Shallom S."/>
            <person name="Settlage R."/>
            <person name="Preston D."/>
            <person name="Adams L.G."/>
            <person name="Garner H.R."/>
        </authorList>
    </citation>
    <scope>NUCLEOTIDE SEQUENCE [LARGE SCALE GENOMIC DNA]</scope>
    <source>
        <strain>1330</strain>
    </source>
</reference>
<proteinExistence type="inferred from homology"/>
<comment type="function">
    <text evidence="1">H(+)-stimulated, divalent metal cation uptake system.</text>
</comment>
<comment type="subcellular location">
    <subcellularLocation>
        <location evidence="1">Cell inner membrane</location>
        <topology evidence="1">Multi-pass membrane protein</topology>
    </subcellularLocation>
</comment>
<comment type="similarity">
    <text evidence="1">Belongs to the NRAMP family.</text>
</comment>
<keyword id="KW-0997">Cell inner membrane</keyword>
<keyword id="KW-1003">Cell membrane</keyword>
<keyword id="KW-0406">Ion transport</keyword>
<keyword id="KW-0472">Membrane</keyword>
<keyword id="KW-0769">Symport</keyword>
<keyword id="KW-0812">Transmembrane</keyword>
<keyword id="KW-1133">Transmembrane helix</keyword>
<keyword id="KW-0813">Transport</keyword>
<gene>
    <name evidence="1" type="primary">mntH</name>
    <name type="ordered locus">BR1441</name>
    <name type="ordered locus">BS1330_I1435</name>
</gene>
<evidence type="ECO:0000255" key="1">
    <source>
        <dbReference type="HAMAP-Rule" id="MF_00221"/>
    </source>
</evidence>
<name>MNTH_BRUSU</name>
<feature type="chain" id="PRO_0000212614" description="Divalent metal cation transporter MntH">
    <location>
        <begin position="1"/>
        <end position="456"/>
    </location>
</feature>
<feature type="transmembrane region" description="Helical" evidence="1">
    <location>
        <begin position="47"/>
        <end position="67"/>
    </location>
</feature>
<feature type="transmembrane region" description="Helical" evidence="1">
    <location>
        <begin position="77"/>
        <end position="97"/>
    </location>
</feature>
<feature type="transmembrane region" description="Helical" evidence="1">
    <location>
        <begin position="123"/>
        <end position="143"/>
    </location>
</feature>
<feature type="transmembrane region" description="Helical" evidence="1">
    <location>
        <begin position="151"/>
        <end position="171"/>
    </location>
</feature>
<feature type="transmembrane region" description="Helical" evidence="1">
    <location>
        <begin position="184"/>
        <end position="204"/>
    </location>
</feature>
<feature type="transmembrane region" description="Helical" evidence="1">
    <location>
        <begin position="227"/>
        <end position="247"/>
    </location>
</feature>
<feature type="transmembrane region" description="Helical" evidence="1">
    <location>
        <begin position="276"/>
        <end position="296"/>
    </location>
</feature>
<feature type="transmembrane region" description="Helical" evidence="1">
    <location>
        <begin position="316"/>
        <end position="336"/>
    </location>
</feature>
<feature type="transmembrane region" description="Helical" evidence="1">
    <location>
        <begin position="369"/>
        <end position="389"/>
    </location>
</feature>
<feature type="transmembrane region" description="Helical" evidence="1">
    <location>
        <begin position="392"/>
        <end position="412"/>
    </location>
</feature>
<feature type="transmembrane region" description="Helical" evidence="1">
    <location>
        <begin position="422"/>
        <end position="442"/>
    </location>
</feature>
<organism>
    <name type="scientific">Brucella suis biovar 1 (strain 1330)</name>
    <dbReference type="NCBI Taxonomy" id="204722"/>
    <lineage>
        <taxon>Bacteria</taxon>
        <taxon>Pseudomonadati</taxon>
        <taxon>Pseudomonadota</taxon>
        <taxon>Alphaproteobacteria</taxon>
        <taxon>Hyphomicrobiales</taxon>
        <taxon>Brucellaceae</taxon>
        <taxon>Brucella/Ochrobactrum group</taxon>
        <taxon>Brucella</taxon>
    </lineage>
</organism>
<accession>P65545</accession>
<accession>G0KBK1</accession>
<accession>Q8YI76</accession>
<sequence length="456" mass="49027">MVPHGSCPSGAREVTFEGWRRERGEASMSDVHRTIRVNRSGSKFRRALSFFGPGYLVAVGYMDPGNWATSLAGGSRFGYALLSVVLLSNLMAVLLQALCTRLAVATGRDLAQACRDAYPRFLAWPLWLLAELAICATDLAEVIGTAIGLNLLFGIPLEIGVILTAVDVLLVLYLQNKGFRRVEALIITLLGVIALCFLTQIIMAQPQWGEVIKGFAPTTEIVSNPDMLYIALGIIGATVMPHNLYLHSGIVQTRDYGHTTAEKREAIRYATLDSTIALTFALVINASILILAAASFHATGHTGVEDLDKAHALLNPLLGSAIAPALFAIALLCCGLNSTITATMAGQIVMEGFIDIRLKPWIRRAITRFVAIVPAAIVTILYGSQGTTELLILSQVVLSLQLPFAVIPLVIFTAQKKKMGSLAAAPWVTFLAAITAAIIVVLNLKLIYDFFTGAPI</sequence>
<protein>
    <recommendedName>
        <fullName evidence="1">Divalent metal cation transporter MntH</fullName>
    </recommendedName>
</protein>